<comment type="function">
    <text evidence="1 7">Calcium/calmodulin-dependent protein kinase belonging to a proposed calcium-triggered signaling cascade involved in a number of cellular processes. Phosphorylates CAMK1, CAMK4 and CAMK1D (By similarity). Efficiently phosphorylates 5'-AMP-activated protein kinase (AMPK) trimer, including that consisting of PRKAA1, PRKAB1 and PRKAG1. This phosphorylation is stimulated in response to Ca(2+) signals (By similarity). May play a role in neurite growth. Isoform 2 may promote neurite elongation, while isoform 1 may promoter neurite branching (By similarity). May be involved in hippocampal activation of CREB1.</text>
</comment>
<comment type="catalytic activity">
    <reaction>
        <text>L-seryl-[protein] + ATP = O-phospho-L-seryl-[protein] + ADP + H(+)</text>
        <dbReference type="Rhea" id="RHEA:17989"/>
        <dbReference type="Rhea" id="RHEA-COMP:9863"/>
        <dbReference type="Rhea" id="RHEA-COMP:11604"/>
        <dbReference type="ChEBI" id="CHEBI:15378"/>
        <dbReference type="ChEBI" id="CHEBI:29999"/>
        <dbReference type="ChEBI" id="CHEBI:30616"/>
        <dbReference type="ChEBI" id="CHEBI:83421"/>
        <dbReference type="ChEBI" id="CHEBI:456216"/>
        <dbReference type="EC" id="2.7.11.17"/>
    </reaction>
</comment>
<comment type="catalytic activity">
    <reaction>
        <text>L-threonyl-[protein] + ATP = O-phospho-L-threonyl-[protein] + ADP + H(+)</text>
        <dbReference type="Rhea" id="RHEA:46608"/>
        <dbReference type="Rhea" id="RHEA-COMP:11060"/>
        <dbReference type="Rhea" id="RHEA-COMP:11605"/>
        <dbReference type="ChEBI" id="CHEBI:15378"/>
        <dbReference type="ChEBI" id="CHEBI:30013"/>
        <dbReference type="ChEBI" id="CHEBI:30616"/>
        <dbReference type="ChEBI" id="CHEBI:61977"/>
        <dbReference type="ChEBI" id="CHEBI:456216"/>
        <dbReference type="EC" id="2.7.11.17"/>
    </reaction>
</comment>
<comment type="activity regulation">
    <text evidence="1">Activated by Ca(2+)/calmodulin. Binding of calmodulin may relieve intrasteric autoinhibition. Autophosphorylation does not alter activity or regulation by Ca(2+)/calmodulin. In part, activity is independent on Ca(2+)/calmodulin (By similarity).</text>
</comment>
<comment type="subunit">
    <text evidence="1">Interacts with calmodulin.</text>
</comment>
<comment type="interaction">
    <interactant intactId="EBI-937199">
        <id>Q8C078</id>
    </interactant>
    <interactant intactId="EBI-719945">
        <id>P49593</id>
        <label>PPM1F</label>
    </interactant>
    <organismsDiffer>true</organismsDiffer>
    <experiments>2</experiments>
</comment>
<comment type="subcellular location">
    <subcellularLocation>
        <location evidence="2">Nucleus</location>
    </subcellularLocation>
    <subcellularLocation>
        <location evidence="2">Cytoplasm</location>
    </subcellularLocation>
    <subcellularLocation>
        <location evidence="2">Cell projection</location>
        <location evidence="2">Neuron projection</location>
    </subcellularLocation>
    <text evidence="2">Predominantly nuclear in unstimulated cells, relocalizes into cytoplasm and neurites after forskolin induction.</text>
</comment>
<comment type="alternative products">
    <event type="alternative splicing"/>
    <isoform>
        <id>Q8C078-1</id>
        <name>1</name>
        <sequence type="displayed"/>
    </isoform>
    <isoform>
        <id>Q8C078-2</id>
        <name>2</name>
        <sequence type="described" ref="VSP_012155"/>
    </isoform>
    <isoform>
        <id>Q8C078-3</id>
        <name>3</name>
        <sequence type="described" ref="VSP_012151 VSP_012152 VSP_012154"/>
    </isoform>
    <isoform>
        <id>Q8C078-4</id>
        <name>4</name>
        <sequence type="described" ref="VSP_012150 VSP_012153"/>
    </isoform>
    <isoform>
        <id>Q8C078-5</id>
        <name>5</name>
        <sequence type="described" ref="VSP_012156"/>
    </isoform>
</comment>
<comment type="tissue specificity">
    <text evidence="6">Expressed in all tissues tested. A differential expression pattern compared to CAMKK1 is observed in the brain.</text>
</comment>
<comment type="domain">
    <text>The autoinhibitory domain overlaps with the calmodulin binding region and may be involved in intrasteric autoinhibition.</text>
</comment>
<comment type="domain">
    <text evidence="1">The RP domain (arginine/proline-rich) is involved in the recognition of CAMKI and CAMK4 as substrates.</text>
</comment>
<comment type="PTM">
    <text evidence="1">Autophosphorylated and phosphorylated by PKA. Each isoform may show a different pattern of phosphorylation.</text>
</comment>
<comment type="disruption phenotype">
    <text evidence="7">Mice are unable to form spatial long-term memory.</text>
</comment>
<comment type="similarity">
    <text evidence="3">Belongs to the protein kinase superfamily. Ser/Thr protein kinase family.</text>
</comment>
<feature type="initiator methionine" description="Removed" evidence="2">
    <location>
        <position position="1"/>
    </location>
</feature>
<feature type="chain" id="PRO_0000086145" description="Calcium/calmodulin-dependent protein kinase kinase 2">
    <location>
        <begin position="2"/>
        <end position="588"/>
    </location>
</feature>
<feature type="domain" description="Protein kinase" evidence="3">
    <location>
        <begin position="165"/>
        <end position="446"/>
    </location>
</feature>
<feature type="region of interest" description="Disordered" evidence="5">
    <location>
        <begin position="1"/>
        <end position="34"/>
    </location>
</feature>
<feature type="region of interest" description="Disordered" evidence="5">
    <location>
        <begin position="64"/>
        <end position="147"/>
    </location>
</feature>
<feature type="region of interest" description="RP domain">
    <location>
        <begin position="204"/>
        <end position="226"/>
    </location>
</feature>
<feature type="region of interest" description="Disordered" evidence="5">
    <location>
        <begin position="205"/>
        <end position="225"/>
    </location>
</feature>
<feature type="region of interest" description="Autoinhibitory domain" evidence="1">
    <location>
        <begin position="472"/>
        <end position="477"/>
    </location>
</feature>
<feature type="region of interest" description="Calmodulin-binding" evidence="1">
    <location>
        <begin position="475"/>
        <end position="500"/>
    </location>
</feature>
<feature type="region of interest" description="Disordered" evidence="5">
    <location>
        <begin position="497"/>
        <end position="588"/>
    </location>
</feature>
<feature type="compositionally biased region" description="Polar residues" evidence="5">
    <location>
        <begin position="1"/>
        <end position="11"/>
    </location>
</feature>
<feature type="compositionally biased region" description="Polar residues" evidence="5">
    <location>
        <begin position="101"/>
        <end position="116"/>
    </location>
</feature>
<feature type="compositionally biased region" description="Low complexity" evidence="5">
    <location>
        <begin position="124"/>
        <end position="139"/>
    </location>
</feature>
<feature type="compositionally biased region" description="Basic and acidic residues" evidence="5">
    <location>
        <begin position="521"/>
        <end position="536"/>
    </location>
</feature>
<feature type="compositionally biased region" description="Pro residues" evidence="5">
    <location>
        <begin position="570"/>
        <end position="580"/>
    </location>
</feature>
<feature type="active site" description="Proton acceptor" evidence="3 4">
    <location>
        <position position="312"/>
    </location>
</feature>
<feature type="binding site" evidence="3">
    <location>
        <begin position="171"/>
        <end position="179"/>
    </location>
    <ligand>
        <name>ATP</name>
        <dbReference type="ChEBI" id="CHEBI:30616"/>
    </ligand>
</feature>
<feature type="binding site" evidence="3">
    <location>
        <position position="194"/>
    </location>
    <ligand>
        <name>ATP</name>
        <dbReference type="ChEBI" id="CHEBI:30616"/>
    </ligand>
</feature>
<feature type="modified residue" description="N-acetylserine" evidence="2">
    <location>
        <position position="2"/>
    </location>
</feature>
<feature type="modified residue" description="Phosphoserine" evidence="13">
    <location>
        <position position="99"/>
    </location>
</feature>
<feature type="modified residue" description="Phosphoserine" evidence="2">
    <location>
        <position position="114"/>
    </location>
</feature>
<feature type="modified residue" description="Phosphoserine" evidence="12 13">
    <location>
        <position position="129"/>
    </location>
</feature>
<feature type="modified residue" description="Phosphoserine" evidence="12 13">
    <location>
        <position position="133"/>
    </location>
</feature>
<feature type="modified residue" description="Phosphoserine" evidence="13">
    <location>
        <position position="137"/>
    </location>
</feature>
<feature type="modified residue" description="Phosphoserine" evidence="13">
    <location>
        <position position="495"/>
    </location>
</feature>
<feature type="modified residue" description="Phosphoserine" evidence="2">
    <location>
        <position position="511"/>
    </location>
</feature>
<feature type="modified residue" description="Phosphoserine" evidence="13">
    <location>
        <position position="572"/>
    </location>
</feature>
<feature type="splice variant" id="VSP_012150" description="In isoform 4." evidence="10">
    <original>ILVKTMIRKRSFGNPFEGS</original>
    <variation>VRRAGPLTKNKNRESPRQG</variation>
    <location>
        <begin position="485"/>
        <end position="503"/>
    </location>
</feature>
<feature type="splice variant" id="VSP_012151" description="In isoform 3." evidence="10">
    <original>N</original>
    <variation>T</variation>
    <location>
        <position position="498"/>
    </location>
</feature>
<feature type="splice variant" id="VSP_012152" description="In isoform 3." evidence="10">
    <location>
        <begin position="499"/>
        <end position="507"/>
    </location>
</feature>
<feature type="splice variant" id="VSP_012153" description="In isoform 4." evidence="10">
    <location>
        <begin position="504"/>
        <end position="588"/>
    </location>
</feature>
<feature type="splice variant" id="VSP_012154" description="In isoform 3." evidence="10">
    <original>RSLSAPGNLLTKKPTREWEPLSEPKEARQRRQPPGPRAGPCGGGGSALVKGGPCVESWGAPAPGSPPRMPPLQPEEVMEPE</original>
    <variation>RSKVAAGRNVPCQRLETCSRSKAAKTAPGAQSRPLWGRRKCSCERWSLRGKLGGSGPWLPTTHASTAARGGDGAGVAAWTT</variation>
    <location>
        <begin position="508"/>
        <end position="588"/>
    </location>
</feature>
<feature type="splice variant" id="VSP_012155" description="In isoform 2." evidence="9">
    <original>KPTREWEPLSEPKEARQRRQPPGPRAGPCGGGGSALVKGGPCVESWGAPAPGSPPRMPPLQPEEVMEPE</original>
    <variation>QGSEDSPRGPEPAPVGEEEVLL</variation>
    <location>
        <begin position="520"/>
        <end position="588"/>
    </location>
</feature>
<feature type="splice variant" id="VSP_012156" description="In isoform 5." evidence="8">
    <original>EARQRRQPPGPRAGPCGGGGSALVKGGPCVESWGAPAPGSPPRMPPLQPEEVMEPE</original>
    <variation>VNACLPACAIASPPLGPGGGQLQSKHVGISSRQDVPSAGAAVPGSLRASGFPARGIQGLGSHGVSCMRAGLRCMALHPECLRTYPGSSGPLDG</variation>
    <location>
        <begin position="533"/>
        <end position="588"/>
    </location>
</feature>
<feature type="sequence conflict" description="In Ref. 2; BAC32023." evidence="11" ref="2">
    <original>Y</original>
    <variation>F</variation>
    <location>
        <position position="176"/>
    </location>
</feature>
<feature type="sequence conflict" description="In Ref. 2; BAC27681." evidence="11" ref="2">
    <original>R</original>
    <variation>H</variation>
    <location>
        <position position="290"/>
    </location>
</feature>
<feature type="sequence conflict" description="In Ref. 1." evidence="11" ref="1">
    <original>MCL</original>
    <variation>IWR</variation>
    <location>
        <begin position="396"/>
        <end position="398"/>
    </location>
</feature>
<feature type="sequence conflict" description="In Ref. 1." evidence="11" ref="1">
    <original>K</original>
    <variation>R</variation>
    <location>
        <position position="401"/>
    </location>
</feature>
<feature type="modified residue" description="Phosphoserine" evidence="1">
    <location sequence="Q8C078-2">
        <position position="522"/>
    </location>
</feature>
<keyword id="KW-0007">Acetylation</keyword>
<keyword id="KW-0025">Alternative splicing</keyword>
<keyword id="KW-0067">ATP-binding</keyword>
<keyword id="KW-0112">Calmodulin-binding</keyword>
<keyword id="KW-0966">Cell projection</keyword>
<keyword id="KW-0963">Cytoplasm</keyword>
<keyword id="KW-0418">Kinase</keyword>
<keyword id="KW-0547">Nucleotide-binding</keyword>
<keyword id="KW-0539">Nucleus</keyword>
<keyword id="KW-0597">Phosphoprotein</keyword>
<keyword id="KW-1185">Reference proteome</keyword>
<keyword id="KW-0723">Serine/threonine-protein kinase</keyword>
<keyword id="KW-0808">Transferase</keyword>
<name>KKCC2_MOUSE</name>
<organism>
    <name type="scientific">Mus musculus</name>
    <name type="common">Mouse</name>
    <dbReference type="NCBI Taxonomy" id="10090"/>
    <lineage>
        <taxon>Eukaryota</taxon>
        <taxon>Metazoa</taxon>
        <taxon>Chordata</taxon>
        <taxon>Craniata</taxon>
        <taxon>Vertebrata</taxon>
        <taxon>Euteleostomi</taxon>
        <taxon>Mammalia</taxon>
        <taxon>Eutheria</taxon>
        <taxon>Euarchontoglires</taxon>
        <taxon>Glires</taxon>
        <taxon>Rodentia</taxon>
        <taxon>Myomorpha</taxon>
        <taxon>Muroidea</taxon>
        <taxon>Muridae</taxon>
        <taxon>Murinae</taxon>
        <taxon>Mus</taxon>
        <taxon>Mus</taxon>
    </lineage>
</organism>
<evidence type="ECO:0000250" key="1"/>
<evidence type="ECO:0000250" key="2">
    <source>
        <dbReference type="UniProtKB" id="Q96RR4"/>
    </source>
</evidence>
<evidence type="ECO:0000255" key="3">
    <source>
        <dbReference type="PROSITE-ProRule" id="PRU00159"/>
    </source>
</evidence>
<evidence type="ECO:0000255" key="4">
    <source>
        <dbReference type="PROSITE-ProRule" id="PRU10027"/>
    </source>
</evidence>
<evidence type="ECO:0000256" key="5">
    <source>
        <dbReference type="SAM" id="MobiDB-lite"/>
    </source>
</evidence>
<evidence type="ECO:0000269" key="6">
    <source>
    </source>
</evidence>
<evidence type="ECO:0000269" key="7">
    <source>
    </source>
</evidence>
<evidence type="ECO:0000303" key="8">
    <source>
    </source>
</evidence>
<evidence type="ECO:0000303" key="9">
    <source>
    </source>
</evidence>
<evidence type="ECO:0000303" key="10">
    <source>
    </source>
</evidence>
<evidence type="ECO:0000305" key="11"/>
<evidence type="ECO:0007744" key="12">
    <source>
    </source>
</evidence>
<evidence type="ECO:0007744" key="13">
    <source>
    </source>
</evidence>
<dbReference type="EC" id="2.7.11.17"/>
<dbReference type="EMBL" id="AF453383">
    <property type="protein sequence ID" value="AAN75696.1"/>
    <property type="molecule type" value="mRNA"/>
</dbReference>
<dbReference type="EMBL" id="AK031399">
    <property type="protein sequence ID" value="BAC27387.1"/>
    <property type="molecule type" value="mRNA"/>
</dbReference>
<dbReference type="EMBL" id="AK032070">
    <property type="protein sequence ID" value="BAC27681.1"/>
    <property type="molecule type" value="mRNA"/>
</dbReference>
<dbReference type="EMBL" id="AK044660">
    <property type="protein sequence ID" value="BAC32023.1"/>
    <property type="molecule type" value="mRNA"/>
</dbReference>
<dbReference type="EMBL" id="BC023103">
    <property type="protein sequence ID" value="AAH23103.1"/>
    <property type="molecule type" value="mRNA"/>
</dbReference>
<dbReference type="EMBL" id="AK122370">
    <property type="protein sequence ID" value="BAC65652.1"/>
    <property type="molecule type" value="mRNA"/>
</dbReference>
<dbReference type="CCDS" id="CCDS19655.1">
    <molecule id="Q8C078-2"/>
</dbReference>
<dbReference type="CCDS" id="CCDS80395.1">
    <molecule id="Q8C078-1"/>
</dbReference>
<dbReference type="RefSeq" id="NP_001186605.1">
    <molecule id="Q8C078-1"/>
    <property type="nucleotide sequence ID" value="NM_001199676.1"/>
</dbReference>
<dbReference type="RefSeq" id="NP_663333.1">
    <molecule id="Q8C078-2"/>
    <property type="nucleotide sequence ID" value="NM_145358.2"/>
</dbReference>
<dbReference type="RefSeq" id="XP_006530293.1">
    <molecule id="Q8C078-5"/>
    <property type="nucleotide sequence ID" value="XM_006530230.5"/>
</dbReference>
<dbReference type="RefSeq" id="XP_006530294.1">
    <molecule id="Q8C078-5"/>
    <property type="nucleotide sequence ID" value="XM_006530231.5"/>
</dbReference>
<dbReference type="RefSeq" id="XP_017176252.1">
    <molecule id="Q8C078-1"/>
    <property type="nucleotide sequence ID" value="XM_017320763.3"/>
</dbReference>
<dbReference type="SMR" id="Q8C078"/>
<dbReference type="BioGRID" id="228904">
    <property type="interactions" value="10"/>
</dbReference>
<dbReference type="FunCoup" id="Q8C078">
    <property type="interactions" value="1669"/>
</dbReference>
<dbReference type="IntAct" id="Q8C078">
    <property type="interactions" value="4"/>
</dbReference>
<dbReference type="MINT" id="Q8C078"/>
<dbReference type="STRING" id="10090.ENSMUSP00000107297"/>
<dbReference type="BindingDB" id="Q8C078"/>
<dbReference type="ChEMBL" id="CHEMBL4295888"/>
<dbReference type="iPTMnet" id="Q8C078"/>
<dbReference type="PhosphoSitePlus" id="Q8C078"/>
<dbReference type="SwissPalm" id="Q8C078"/>
<dbReference type="jPOST" id="Q8C078"/>
<dbReference type="PaxDb" id="10090-ENSMUSP00000107297"/>
<dbReference type="PeptideAtlas" id="Q8C078"/>
<dbReference type="ProteomicsDB" id="264761">
    <molecule id="Q8C078-1"/>
</dbReference>
<dbReference type="ProteomicsDB" id="264762">
    <molecule id="Q8C078-2"/>
</dbReference>
<dbReference type="ProteomicsDB" id="264763">
    <molecule id="Q8C078-3"/>
</dbReference>
<dbReference type="ProteomicsDB" id="264764">
    <molecule id="Q8C078-4"/>
</dbReference>
<dbReference type="ProteomicsDB" id="264765">
    <molecule id="Q8C078-5"/>
</dbReference>
<dbReference type="Pumba" id="Q8C078"/>
<dbReference type="Antibodypedia" id="19059">
    <property type="antibodies" value="383 antibodies from 35 providers"/>
</dbReference>
<dbReference type="DNASU" id="207565"/>
<dbReference type="Ensembl" id="ENSMUST00000111668.8">
    <molecule id="Q8C078-1"/>
    <property type="protein sequence ID" value="ENSMUSP00000107297.5"/>
    <property type="gene ID" value="ENSMUSG00000029471.14"/>
</dbReference>
<dbReference type="Ensembl" id="ENSMUST00000200109.5">
    <molecule id="Q8C078-2"/>
    <property type="protein sequence ID" value="ENSMUSP00000143732.2"/>
    <property type="gene ID" value="ENSMUSG00000029471.14"/>
</dbReference>
<dbReference type="GeneID" id="207565"/>
<dbReference type="KEGG" id="mmu:207565"/>
<dbReference type="UCSC" id="uc008zlz.3">
    <molecule id="Q8C078-1"/>
    <property type="organism name" value="mouse"/>
</dbReference>
<dbReference type="UCSC" id="uc008zma.3">
    <molecule id="Q8C078-2"/>
    <property type="organism name" value="mouse"/>
</dbReference>
<dbReference type="UCSC" id="uc008zmb.1">
    <molecule id="Q8C078-5"/>
    <property type="organism name" value="mouse"/>
</dbReference>
<dbReference type="UCSC" id="uc008zmc.2">
    <molecule id="Q8C078-4"/>
    <property type="organism name" value="mouse"/>
</dbReference>
<dbReference type="AGR" id="MGI:2444812"/>
<dbReference type="CTD" id="10645"/>
<dbReference type="MGI" id="MGI:2444812">
    <property type="gene designation" value="Camkk2"/>
</dbReference>
<dbReference type="VEuPathDB" id="HostDB:ENSMUSG00000029471"/>
<dbReference type="eggNOG" id="KOG0585">
    <property type="taxonomic scope" value="Eukaryota"/>
</dbReference>
<dbReference type="GeneTree" id="ENSGT00940000161828"/>
<dbReference type="InParanoid" id="Q8C078"/>
<dbReference type="OMA" id="EPRSECR"/>
<dbReference type="OrthoDB" id="68483at2759"/>
<dbReference type="PhylomeDB" id="Q8C078"/>
<dbReference type="TreeFam" id="TF313013"/>
<dbReference type="Reactome" id="R-MMU-111932">
    <property type="pathway name" value="CaMK IV-mediated phosphorylation of CREB"/>
</dbReference>
<dbReference type="Reactome" id="R-MMU-442729">
    <property type="pathway name" value="CREB1 phosphorylation through the activation of CaMKII/CaMKK/CaMKIV cascasde"/>
</dbReference>
<dbReference type="Reactome" id="R-MMU-9619229">
    <property type="pathway name" value="Activation of RAC1 downstream of NMDARs"/>
</dbReference>
<dbReference type="BioGRID-ORCS" id="207565">
    <property type="hits" value="3 hits in 78 CRISPR screens"/>
</dbReference>
<dbReference type="ChiTaRS" id="Camkk2">
    <property type="organism name" value="mouse"/>
</dbReference>
<dbReference type="PRO" id="PR:Q8C078"/>
<dbReference type="Proteomes" id="UP000000589">
    <property type="component" value="Chromosome 5"/>
</dbReference>
<dbReference type="RNAct" id="Q8C078">
    <property type="molecule type" value="protein"/>
</dbReference>
<dbReference type="Bgee" id="ENSMUSG00000029471">
    <property type="expression patterns" value="Expressed in motor neuron and 254 other cell types or tissues"/>
</dbReference>
<dbReference type="ExpressionAtlas" id="Q8C078">
    <property type="expression patterns" value="baseline and differential"/>
</dbReference>
<dbReference type="GO" id="GO:0005829">
    <property type="term" value="C:cytosol"/>
    <property type="evidence" value="ECO:0007669"/>
    <property type="project" value="Ensembl"/>
</dbReference>
<dbReference type="GO" id="GO:0043005">
    <property type="term" value="C:neuron projection"/>
    <property type="evidence" value="ECO:0007669"/>
    <property type="project" value="UniProtKB-SubCell"/>
</dbReference>
<dbReference type="GO" id="GO:0005634">
    <property type="term" value="C:nucleus"/>
    <property type="evidence" value="ECO:0007669"/>
    <property type="project" value="UniProtKB-SubCell"/>
</dbReference>
<dbReference type="GO" id="GO:0005524">
    <property type="term" value="F:ATP binding"/>
    <property type="evidence" value="ECO:0007669"/>
    <property type="project" value="UniProtKB-KW"/>
</dbReference>
<dbReference type="GO" id="GO:0005509">
    <property type="term" value="F:calcium ion binding"/>
    <property type="evidence" value="ECO:0000250"/>
    <property type="project" value="UniProtKB"/>
</dbReference>
<dbReference type="GO" id="GO:0004683">
    <property type="term" value="F:calcium/calmodulin-dependent protein kinase activity"/>
    <property type="evidence" value="ECO:0007669"/>
    <property type="project" value="UniProtKB-EC"/>
</dbReference>
<dbReference type="GO" id="GO:0005516">
    <property type="term" value="F:calmodulin binding"/>
    <property type="evidence" value="ECO:0007669"/>
    <property type="project" value="UniProtKB-KW"/>
</dbReference>
<dbReference type="GO" id="GO:0106310">
    <property type="term" value="F:protein serine kinase activity"/>
    <property type="evidence" value="ECO:0007669"/>
    <property type="project" value="RHEA"/>
</dbReference>
<dbReference type="GO" id="GO:0061762">
    <property type="term" value="P:CAMKK-AMPK signaling cascade"/>
    <property type="evidence" value="ECO:0007669"/>
    <property type="project" value="Ensembl"/>
</dbReference>
<dbReference type="GO" id="GO:1903599">
    <property type="term" value="P:positive regulation of autophagy of mitochondrion"/>
    <property type="evidence" value="ECO:0007669"/>
    <property type="project" value="Ensembl"/>
</dbReference>
<dbReference type="GO" id="GO:0046777">
    <property type="term" value="P:protein autophosphorylation"/>
    <property type="evidence" value="ECO:0000250"/>
    <property type="project" value="UniProtKB"/>
</dbReference>
<dbReference type="GO" id="GO:0006468">
    <property type="term" value="P:protein phosphorylation"/>
    <property type="evidence" value="ECO:0000250"/>
    <property type="project" value="UniProtKB"/>
</dbReference>
<dbReference type="FunFam" id="3.30.200.20:FF:000429">
    <property type="entry name" value="Calcium/calmodulin-dependent protein kinase kinase"/>
    <property type="match status" value="1"/>
</dbReference>
<dbReference type="FunFam" id="1.10.510.10:FF:000091">
    <property type="entry name" value="Calcium/calmodulin-dependent protein kinase kinase 2 isoform 1"/>
    <property type="match status" value="1"/>
</dbReference>
<dbReference type="Gene3D" id="3.30.200.20">
    <property type="entry name" value="Phosphorylase Kinase, domain 1"/>
    <property type="match status" value="1"/>
</dbReference>
<dbReference type="Gene3D" id="1.10.510.10">
    <property type="entry name" value="Transferase(Phosphotransferase) domain 1"/>
    <property type="match status" value="1"/>
</dbReference>
<dbReference type="InterPro" id="IPR011009">
    <property type="entry name" value="Kinase-like_dom_sf"/>
</dbReference>
<dbReference type="InterPro" id="IPR000719">
    <property type="entry name" value="Prot_kinase_dom"/>
</dbReference>
<dbReference type="InterPro" id="IPR017441">
    <property type="entry name" value="Protein_kinase_ATP_BS"/>
</dbReference>
<dbReference type="InterPro" id="IPR008271">
    <property type="entry name" value="Ser/Thr_kinase_AS"/>
</dbReference>
<dbReference type="PANTHER" id="PTHR43895">
    <property type="entry name" value="CALCIUM/CALMODULIN-DEPENDENT PROTEIN KINASE KINASE-RELATED"/>
    <property type="match status" value="1"/>
</dbReference>
<dbReference type="PANTHER" id="PTHR43895:SF39">
    <property type="entry name" value="CALCIUM_CALMODULIN-DEPENDENT PROTEIN KINASE KINASE 2"/>
    <property type="match status" value="1"/>
</dbReference>
<dbReference type="Pfam" id="PF00069">
    <property type="entry name" value="Pkinase"/>
    <property type="match status" value="1"/>
</dbReference>
<dbReference type="SMART" id="SM00220">
    <property type="entry name" value="S_TKc"/>
    <property type="match status" value="1"/>
</dbReference>
<dbReference type="SUPFAM" id="SSF56112">
    <property type="entry name" value="Protein kinase-like (PK-like)"/>
    <property type="match status" value="1"/>
</dbReference>
<dbReference type="PROSITE" id="PS00107">
    <property type="entry name" value="PROTEIN_KINASE_ATP"/>
    <property type="match status" value="1"/>
</dbReference>
<dbReference type="PROSITE" id="PS50011">
    <property type="entry name" value="PROTEIN_KINASE_DOM"/>
    <property type="match status" value="1"/>
</dbReference>
<dbReference type="PROSITE" id="PS00108">
    <property type="entry name" value="PROTEIN_KINASE_ST"/>
    <property type="match status" value="1"/>
</dbReference>
<accession>Q8C078</accession>
<accession>Q80TS0</accession>
<accession>Q8BXM8</accession>
<accession>Q8C0G3</accession>
<accession>Q8CH42</accession>
<accession>Q8QZT7</accession>
<sequence>MSSCVSSQPTSDRVAPQDELGSGGGSREGQKPCEALRGLSSLSIHLGMESFIVVTECEPGRGVDLNLARDQPPEADGQELPLEASDPESRSPLSGRKMSLQEPSQGGPASSSNSLDMNGRCICPSLSYSPASSPQSSPRMPRRPTVESHHVSITGLQDCVQLNQYTLKDEIGKGSYGVVKLAYNENDNTYYAMKVLSKKKLIRQAGFPRRPPPRGARPAPGGCIQPRGPIEQVYQEIAILKKLDHPNVVKLVEVLDDPNEDHLYMVFELVNQGPVMEVPTLKPLSEDQARFYFQDLIKGIEYLHYQKIIHRDIKPSNLLVGEDGHIKIADFGVSNEFKGSDALLSNTVGTPAFMAPESLSETRKIFSGKALDVWAMGVTLYCFVFGQCPFMDERIMCLHSKIKSQALEFPDQPDIAEDLKDLITRMLDKNPESRIVVPEIKLHPWVTRHGAEPLPSEDENCTLVEVTEEEVENSVKHIPSLATVILVKTMIRKRSFGNPFEGSRREERSLSAPGNLLTKKPTREWEPLSEPKEARQRRQPPGPRAGPCGGGGSALVKGGPCVESWGAPAPGSPPRMPPLQPEEVMEPE</sequence>
<reference key="1">
    <citation type="journal article" date="2003" name="Brain Res. Mol. Brain Res.">
        <title>Cloning of mouse Ca2+/calmodulin-dependent protein kinase kinase beta (CaMKKbeta) and characterization of CaMKKbeta and CaMKKalpha distribution in the adult mouse brain.</title>
        <authorList>
            <person name="Vinet J."/>
            <person name="Carra S."/>
            <person name="Blom J.M.C."/>
            <person name="Harvey M."/>
            <person name="Brunello N."/>
            <person name="Barden N."/>
            <person name="Tascedda F."/>
        </authorList>
    </citation>
    <scope>NUCLEOTIDE SEQUENCE [MRNA] (ISOFORM 1)</scope>
    <scope>TISSUE SPECIFICITY</scope>
</reference>
<reference key="2">
    <citation type="journal article" date="2005" name="Science">
        <title>The transcriptional landscape of the mammalian genome.</title>
        <authorList>
            <person name="Carninci P."/>
            <person name="Kasukawa T."/>
            <person name="Katayama S."/>
            <person name="Gough J."/>
            <person name="Frith M.C."/>
            <person name="Maeda N."/>
            <person name="Oyama R."/>
            <person name="Ravasi T."/>
            <person name="Lenhard B."/>
            <person name="Wells C."/>
            <person name="Kodzius R."/>
            <person name="Shimokawa K."/>
            <person name="Bajic V.B."/>
            <person name="Brenner S.E."/>
            <person name="Batalov S."/>
            <person name="Forrest A.R."/>
            <person name="Zavolan M."/>
            <person name="Davis M.J."/>
            <person name="Wilming L.G."/>
            <person name="Aidinis V."/>
            <person name="Allen J.E."/>
            <person name="Ambesi-Impiombato A."/>
            <person name="Apweiler R."/>
            <person name="Aturaliya R.N."/>
            <person name="Bailey T.L."/>
            <person name="Bansal M."/>
            <person name="Baxter L."/>
            <person name="Beisel K.W."/>
            <person name="Bersano T."/>
            <person name="Bono H."/>
            <person name="Chalk A.M."/>
            <person name="Chiu K.P."/>
            <person name="Choudhary V."/>
            <person name="Christoffels A."/>
            <person name="Clutterbuck D.R."/>
            <person name="Crowe M.L."/>
            <person name="Dalla E."/>
            <person name="Dalrymple B.P."/>
            <person name="de Bono B."/>
            <person name="Della Gatta G."/>
            <person name="di Bernardo D."/>
            <person name="Down T."/>
            <person name="Engstrom P."/>
            <person name="Fagiolini M."/>
            <person name="Faulkner G."/>
            <person name="Fletcher C.F."/>
            <person name="Fukushima T."/>
            <person name="Furuno M."/>
            <person name="Futaki S."/>
            <person name="Gariboldi M."/>
            <person name="Georgii-Hemming P."/>
            <person name="Gingeras T.R."/>
            <person name="Gojobori T."/>
            <person name="Green R.E."/>
            <person name="Gustincich S."/>
            <person name="Harbers M."/>
            <person name="Hayashi Y."/>
            <person name="Hensch T.K."/>
            <person name="Hirokawa N."/>
            <person name="Hill D."/>
            <person name="Huminiecki L."/>
            <person name="Iacono M."/>
            <person name="Ikeo K."/>
            <person name="Iwama A."/>
            <person name="Ishikawa T."/>
            <person name="Jakt M."/>
            <person name="Kanapin A."/>
            <person name="Katoh M."/>
            <person name="Kawasawa Y."/>
            <person name="Kelso J."/>
            <person name="Kitamura H."/>
            <person name="Kitano H."/>
            <person name="Kollias G."/>
            <person name="Krishnan S.P."/>
            <person name="Kruger A."/>
            <person name="Kummerfeld S.K."/>
            <person name="Kurochkin I.V."/>
            <person name="Lareau L.F."/>
            <person name="Lazarevic D."/>
            <person name="Lipovich L."/>
            <person name="Liu J."/>
            <person name="Liuni S."/>
            <person name="McWilliam S."/>
            <person name="Madan Babu M."/>
            <person name="Madera M."/>
            <person name="Marchionni L."/>
            <person name="Matsuda H."/>
            <person name="Matsuzawa S."/>
            <person name="Miki H."/>
            <person name="Mignone F."/>
            <person name="Miyake S."/>
            <person name="Morris K."/>
            <person name="Mottagui-Tabar S."/>
            <person name="Mulder N."/>
            <person name="Nakano N."/>
            <person name="Nakauchi H."/>
            <person name="Ng P."/>
            <person name="Nilsson R."/>
            <person name="Nishiguchi S."/>
            <person name="Nishikawa S."/>
            <person name="Nori F."/>
            <person name="Ohara O."/>
            <person name="Okazaki Y."/>
            <person name="Orlando V."/>
            <person name="Pang K.C."/>
            <person name="Pavan W.J."/>
            <person name="Pavesi G."/>
            <person name="Pesole G."/>
            <person name="Petrovsky N."/>
            <person name="Piazza S."/>
            <person name="Reed J."/>
            <person name="Reid J.F."/>
            <person name="Ring B.Z."/>
            <person name="Ringwald M."/>
            <person name="Rost B."/>
            <person name="Ruan Y."/>
            <person name="Salzberg S.L."/>
            <person name="Sandelin A."/>
            <person name="Schneider C."/>
            <person name="Schoenbach C."/>
            <person name="Sekiguchi K."/>
            <person name="Semple C.A."/>
            <person name="Seno S."/>
            <person name="Sessa L."/>
            <person name="Sheng Y."/>
            <person name="Shibata Y."/>
            <person name="Shimada H."/>
            <person name="Shimada K."/>
            <person name="Silva D."/>
            <person name="Sinclair B."/>
            <person name="Sperling S."/>
            <person name="Stupka E."/>
            <person name="Sugiura K."/>
            <person name="Sultana R."/>
            <person name="Takenaka Y."/>
            <person name="Taki K."/>
            <person name="Tammoja K."/>
            <person name="Tan S.L."/>
            <person name="Tang S."/>
            <person name="Taylor M.S."/>
            <person name="Tegner J."/>
            <person name="Teichmann S.A."/>
            <person name="Ueda H.R."/>
            <person name="van Nimwegen E."/>
            <person name="Verardo R."/>
            <person name="Wei C.L."/>
            <person name="Yagi K."/>
            <person name="Yamanishi H."/>
            <person name="Zabarovsky E."/>
            <person name="Zhu S."/>
            <person name="Zimmer A."/>
            <person name="Hide W."/>
            <person name="Bult C."/>
            <person name="Grimmond S.M."/>
            <person name="Teasdale R.D."/>
            <person name="Liu E.T."/>
            <person name="Brusic V."/>
            <person name="Quackenbush J."/>
            <person name="Wahlestedt C."/>
            <person name="Mattick J.S."/>
            <person name="Hume D.A."/>
            <person name="Kai C."/>
            <person name="Sasaki D."/>
            <person name="Tomaru Y."/>
            <person name="Fukuda S."/>
            <person name="Kanamori-Katayama M."/>
            <person name="Suzuki M."/>
            <person name="Aoki J."/>
            <person name="Arakawa T."/>
            <person name="Iida J."/>
            <person name="Imamura K."/>
            <person name="Itoh M."/>
            <person name="Kato T."/>
            <person name="Kawaji H."/>
            <person name="Kawagashira N."/>
            <person name="Kawashima T."/>
            <person name="Kojima M."/>
            <person name="Kondo S."/>
            <person name="Konno H."/>
            <person name="Nakano K."/>
            <person name="Ninomiya N."/>
            <person name="Nishio T."/>
            <person name="Okada M."/>
            <person name="Plessy C."/>
            <person name="Shibata K."/>
            <person name="Shiraki T."/>
            <person name="Suzuki S."/>
            <person name="Tagami M."/>
            <person name="Waki K."/>
            <person name="Watahiki A."/>
            <person name="Okamura-Oho Y."/>
            <person name="Suzuki H."/>
            <person name="Kawai J."/>
            <person name="Hayashizaki Y."/>
        </authorList>
    </citation>
    <scope>NUCLEOTIDE SEQUENCE [LARGE SCALE MRNA] (ISOFORMS 1; 3 AND 4)</scope>
    <source>
        <strain>C57BL/6J</strain>
        <tissue>Medulla oblongata</tissue>
        <tissue>Retina</tissue>
        <tissue>Testis</tissue>
    </source>
</reference>
<reference key="3">
    <citation type="journal article" date="2004" name="Genome Res.">
        <title>The status, quality, and expansion of the NIH full-length cDNA project: the Mammalian Gene Collection (MGC).</title>
        <authorList>
            <consortium name="The MGC Project Team"/>
        </authorList>
    </citation>
    <scope>NUCLEOTIDE SEQUENCE [LARGE SCALE MRNA] (ISOFORM 2)</scope>
    <source>
        <strain>FVB/N</strain>
        <tissue>Mammary tumor</tissue>
    </source>
</reference>
<reference key="4">
    <citation type="journal article" date="2003" name="DNA Res.">
        <title>Prediction of the coding sequences of mouse homologues of KIAA gene: III. The complete nucleotide sequences of 500 mouse KIAA-homologous cDNAs identified by screening of terminal sequences of cDNA clones randomly sampled from size-fractionated libraries.</title>
        <authorList>
            <person name="Okazaki N."/>
            <person name="Kikuno R."/>
            <person name="Ohara R."/>
            <person name="Inamoto S."/>
            <person name="Koseki H."/>
            <person name="Hiraoka S."/>
            <person name="Saga Y."/>
            <person name="Nagase T."/>
            <person name="Ohara O."/>
            <person name="Koga H."/>
        </authorList>
    </citation>
    <scope>NUCLEOTIDE SEQUENCE [LARGE SCALE MRNA] OF 207-588 (ISOFORM 5)</scope>
    <source>
        <tissue>Brain</tissue>
    </source>
</reference>
<reference key="5">
    <citation type="journal article" date="2003" name="J. Neurosci.">
        <title>Loss of Ca2+/calmodulin kinase kinase beta affects the formation of some, but not all, types of hippocampus-dependent long-term memory.</title>
        <authorList>
            <person name="Peters M."/>
            <person name="Mizuno K."/>
            <person name="Ris L."/>
            <person name="Angelo M."/>
            <person name="Godaux E."/>
            <person name="Giese K.P."/>
        </authorList>
    </citation>
    <scope>FUNCTION</scope>
    <scope>DISRUPTION PHENOTYPE</scope>
</reference>
<reference key="6">
    <citation type="journal article" date="2007" name="Mol. Cell. Proteomics">
        <title>Qualitative and quantitative analyses of protein phosphorylation in naive and stimulated mouse synaptosomal preparations.</title>
        <authorList>
            <person name="Munton R.P."/>
            <person name="Tweedie-Cullen R."/>
            <person name="Livingstone-Zatchej M."/>
            <person name="Weinandy F."/>
            <person name="Waidelich M."/>
            <person name="Longo D."/>
            <person name="Gehrig P."/>
            <person name="Potthast F."/>
            <person name="Rutishauser D."/>
            <person name="Gerrits B."/>
            <person name="Panse C."/>
            <person name="Schlapbach R."/>
            <person name="Mansuy I.M."/>
        </authorList>
    </citation>
    <scope>IDENTIFICATION BY MASS SPECTROMETRY [LARGE SCALE ANALYSIS]</scope>
    <source>
        <tissue>Brain cortex</tissue>
    </source>
</reference>
<reference key="7">
    <citation type="journal article" date="2007" name="Proc. Natl. Acad. Sci. U.S.A.">
        <title>Large-scale phosphorylation analysis of mouse liver.</title>
        <authorList>
            <person name="Villen J."/>
            <person name="Beausoleil S.A."/>
            <person name="Gerber S.A."/>
            <person name="Gygi S.P."/>
        </authorList>
    </citation>
    <scope>PHOSPHORYLATION [LARGE SCALE ANALYSIS] AT SER-129 AND SER-133</scope>
    <scope>IDENTIFICATION BY MASS SPECTROMETRY [LARGE SCALE ANALYSIS]</scope>
    <source>
        <tissue>Liver</tissue>
    </source>
</reference>
<reference key="8">
    <citation type="journal article" date="2010" name="Cell">
        <title>A tissue-specific atlas of mouse protein phosphorylation and expression.</title>
        <authorList>
            <person name="Huttlin E.L."/>
            <person name="Jedrychowski M.P."/>
            <person name="Elias J.E."/>
            <person name="Goswami T."/>
            <person name="Rad R."/>
            <person name="Beausoleil S.A."/>
            <person name="Villen J."/>
            <person name="Haas W."/>
            <person name="Sowa M.E."/>
            <person name="Gygi S.P."/>
        </authorList>
    </citation>
    <scope>PHOSPHORYLATION [LARGE SCALE ANALYSIS] AT SER-99; SER-129; SER-133; SER-137; SER-495 AND SER-572</scope>
    <scope>IDENTIFICATION BY MASS SPECTROMETRY [LARGE SCALE ANALYSIS]</scope>
    <source>
        <tissue>Brain</tissue>
        <tissue>Brown adipose tissue</tissue>
        <tissue>Kidney</tissue>
        <tissue>Lung</tissue>
        <tissue>Spleen</tissue>
        <tissue>Testis</tissue>
    </source>
</reference>
<proteinExistence type="evidence at protein level"/>
<protein>
    <recommendedName>
        <fullName>Calcium/calmodulin-dependent protein kinase kinase 2</fullName>
        <shortName>CaM-KK 2</shortName>
        <shortName>CaM-kinase kinase 2</shortName>
        <shortName>CaMKK 2</shortName>
        <ecNumber>2.7.11.17</ecNumber>
    </recommendedName>
    <alternativeName>
        <fullName>Calcium/calmodulin-dependent protein kinase kinase beta</fullName>
        <shortName>CaM-KK beta</shortName>
        <shortName>CaM-kinase kinase beta</shortName>
        <shortName>CaMKK beta</shortName>
    </alternativeName>
</protein>
<gene>
    <name type="primary">Camkk2</name>
    <name type="synonym">Kiaa0787</name>
</gene>